<feature type="chain" id="PRO_0000311832" description="Myb/SANT-like DNA-binding domain-containing protein 4">
    <location>
        <begin position="1"/>
        <end position="345"/>
    </location>
</feature>
<feature type="domain" description="Myb-like">
    <location>
        <begin position="4"/>
        <end position="77"/>
    </location>
</feature>
<feature type="region of interest" description="Disordered" evidence="3">
    <location>
        <begin position="141"/>
        <end position="175"/>
    </location>
</feature>
<feature type="coiled-coil region" evidence="2">
    <location>
        <begin position="202"/>
        <end position="344"/>
    </location>
</feature>
<feature type="modified residue" description="Phosphoserine" evidence="4">
    <location>
        <position position="106"/>
    </location>
</feature>
<feature type="modified residue" description="Phosphothreonine" evidence="1">
    <location>
        <position position="188"/>
    </location>
</feature>
<feature type="cross-link" description="Glycyl lysine isopeptide (Lys-Gly) (interchain with G-Cter in SUMO2)" evidence="1">
    <location>
        <position position="9"/>
    </location>
</feature>
<feature type="cross-link" description="Glycyl lysine isopeptide (Lys-Gly) (interchain with G-Cter in SUMO2)" evidence="1">
    <location>
        <position position="114"/>
    </location>
</feature>
<feature type="cross-link" description="Glycyl lysine isopeptide (Lys-Gly) (interchain with G-Cter in SUMO2)" evidence="1">
    <location>
        <position position="142"/>
    </location>
</feature>
<feature type="cross-link" description="Glycyl lysine isopeptide (Lys-Gly) (interchain with G-Cter in SUMO2)" evidence="1">
    <location>
        <position position="237"/>
    </location>
</feature>
<feature type="cross-link" description="Glycyl lysine isopeptide (Lys-Gly) (interchain with G-Cter in SUMO2)" evidence="1">
    <location>
        <position position="254"/>
    </location>
</feature>
<feature type="cross-link" description="Glycyl lysine isopeptide (Lys-Gly) (interchain with G-Cter in SUMO2)" evidence="1">
    <location>
        <position position="273"/>
    </location>
</feature>
<reference key="1">
    <citation type="journal article" date="2004" name="Genome Res.">
        <title>The status, quality, and expansion of the NIH full-length cDNA project: the Mammalian Gene Collection (MGC).</title>
        <authorList>
            <consortium name="The MGC Project Team"/>
        </authorList>
    </citation>
    <scope>NUCLEOTIDE SEQUENCE [LARGE SCALE MRNA]</scope>
    <source>
        <tissue>Ovary</tissue>
    </source>
</reference>
<reference key="2">
    <citation type="journal article" date="2012" name="Nat. Commun.">
        <title>Quantitative maps of protein phosphorylation sites across 14 different rat organs and tissues.</title>
        <authorList>
            <person name="Lundby A."/>
            <person name="Secher A."/>
            <person name="Lage K."/>
            <person name="Nordsborg N.B."/>
            <person name="Dmytriyev A."/>
            <person name="Lundby C."/>
            <person name="Olsen J.V."/>
        </authorList>
    </citation>
    <scope>PHOSPHORYLATION [LARGE SCALE ANALYSIS] AT SER-106</scope>
    <scope>IDENTIFICATION BY MASS SPECTROMETRY [LARGE SCALE ANALYSIS]</scope>
</reference>
<proteinExistence type="evidence at protein level"/>
<name>MSD4_RAT</name>
<sequence length="345" mass="41233">MKQLKRKRKSNFSVQETQTLLKEITKRKEVIFSKQLNTTINVMKRMAWEEIAQCVNAVGEGEQRTGTEVKRRYLDWRALMKRKRMKANMKLVGSGFPLPTSDLDDSLTEDIDEKIAFRNDANFDWQNVADFRDAGGSLTEVKVEEEERDPQSPEFEIEEEEEMLSSVIPDSRRENELPDFPHIDEFFTLNSTPSRPTYDEPHLLMNIEKQKLELEKRRLDIEAERLQVEKERLQIEKERLRHLDLEHERLQLEKERLQIEREKWRLQLVSTEKPALENELGQGEKSMLQPQDIEAEKLKLERERLQLEKDRLQFLKFESEKLQIEKERLQVEKERLRIQKEGHLP</sequence>
<protein>
    <recommendedName>
        <fullName>Myb/SANT-like DNA-binding domain-containing protein 4</fullName>
    </recommendedName>
</protein>
<dbReference type="EMBL" id="BC096000">
    <property type="protein sequence ID" value="AAH96000.1"/>
    <property type="molecule type" value="mRNA"/>
</dbReference>
<dbReference type="RefSeq" id="NP_001019528.1">
    <property type="nucleotide sequence ID" value="NM_001024357.1"/>
</dbReference>
<dbReference type="RefSeq" id="XP_017451303.1">
    <property type="nucleotide sequence ID" value="XM_017595814.1"/>
</dbReference>
<dbReference type="RefSeq" id="XP_063122027.1">
    <property type="nucleotide sequence ID" value="XM_063265957.1"/>
</dbReference>
<dbReference type="SMR" id="Q501L3"/>
<dbReference type="FunCoup" id="Q501L3">
    <property type="interactions" value="1294"/>
</dbReference>
<dbReference type="STRING" id="10116.ENSRNOP00000030251"/>
<dbReference type="iPTMnet" id="Q501L3"/>
<dbReference type="PhosphoSitePlus" id="Q501L3"/>
<dbReference type="PaxDb" id="10116-ENSRNOP00000030251"/>
<dbReference type="Ensembl" id="ENSRNOT00000034482.5">
    <property type="protein sequence ID" value="ENSRNOP00000030251.3"/>
    <property type="gene ID" value="ENSRNOG00000022245.5"/>
</dbReference>
<dbReference type="GeneID" id="500941"/>
<dbReference type="KEGG" id="rno:500941"/>
<dbReference type="UCSC" id="RGD:1565380">
    <property type="organism name" value="rat"/>
</dbReference>
<dbReference type="AGR" id="RGD:1565380"/>
<dbReference type="CTD" id="84437"/>
<dbReference type="RGD" id="1565380">
    <property type="gene designation" value="Msantd4"/>
</dbReference>
<dbReference type="eggNOG" id="ENOG502RGM9">
    <property type="taxonomic scope" value="Eukaryota"/>
</dbReference>
<dbReference type="GeneTree" id="ENSGT00440000039469"/>
<dbReference type="HOGENOM" id="CLU_066150_0_0_1"/>
<dbReference type="InParanoid" id="Q501L3"/>
<dbReference type="OMA" id="WLKANIK"/>
<dbReference type="OrthoDB" id="3066195at2759"/>
<dbReference type="PhylomeDB" id="Q501L3"/>
<dbReference type="TreeFam" id="TF330965"/>
<dbReference type="PRO" id="PR:Q501L3"/>
<dbReference type="Proteomes" id="UP000002494">
    <property type="component" value="Chromosome 8"/>
</dbReference>
<dbReference type="Bgee" id="ENSRNOG00000022245">
    <property type="expression patterns" value="Expressed in skeletal muscle tissue and 20 other cell types or tissues"/>
</dbReference>
<dbReference type="GO" id="GO:0005634">
    <property type="term" value="C:nucleus"/>
    <property type="evidence" value="ECO:0007669"/>
    <property type="project" value="Ensembl"/>
</dbReference>
<dbReference type="InterPro" id="IPR026162">
    <property type="entry name" value="MSANTD4"/>
</dbReference>
<dbReference type="InterPro" id="IPR028002">
    <property type="entry name" value="Myb_DNA-bind_5"/>
</dbReference>
<dbReference type="PANTHER" id="PTHR21732">
    <property type="entry name" value="MYB/SANT-LIKE DNA-BINDING DOMAIN-CONTAINING PROTEIN 4"/>
    <property type="match status" value="1"/>
</dbReference>
<dbReference type="PANTHER" id="PTHR21732:SF0">
    <property type="entry name" value="MYB_SANT-LIKE DNA-BINDING DOMAIN-CONTAINING PROTEIN 4"/>
    <property type="match status" value="1"/>
</dbReference>
<dbReference type="Pfam" id="PF13873">
    <property type="entry name" value="Myb_DNA-bind_5"/>
    <property type="match status" value="1"/>
</dbReference>
<organism>
    <name type="scientific">Rattus norvegicus</name>
    <name type="common">Rat</name>
    <dbReference type="NCBI Taxonomy" id="10116"/>
    <lineage>
        <taxon>Eukaryota</taxon>
        <taxon>Metazoa</taxon>
        <taxon>Chordata</taxon>
        <taxon>Craniata</taxon>
        <taxon>Vertebrata</taxon>
        <taxon>Euteleostomi</taxon>
        <taxon>Mammalia</taxon>
        <taxon>Eutheria</taxon>
        <taxon>Euarchontoglires</taxon>
        <taxon>Glires</taxon>
        <taxon>Rodentia</taxon>
        <taxon>Myomorpha</taxon>
        <taxon>Muroidea</taxon>
        <taxon>Muridae</taxon>
        <taxon>Murinae</taxon>
        <taxon>Rattus</taxon>
    </lineage>
</organism>
<keyword id="KW-0175">Coiled coil</keyword>
<keyword id="KW-1017">Isopeptide bond</keyword>
<keyword id="KW-0597">Phosphoprotein</keyword>
<keyword id="KW-1185">Reference proteome</keyword>
<keyword id="KW-0832">Ubl conjugation</keyword>
<evidence type="ECO:0000250" key="1">
    <source>
        <dbReference type="UniProtKB" id="Q8NCY6"/>
    </source>
</evidence>
<evidence type="ECO:0000255" key="2"/>
<evidence type="ECO:0000256" key="3">
    <source>
        <dbReference type="SAM" id="MobiDB-lite"/>
    </source>
</evidence>
<evidence type="ECO:0007744" key="4">
    <source>
    </source>
</evidence>
<accession>Q501L3</accession>
<gene>
    <name type="primary">Msantd4</name>
</gene>